<organism>
    <name type="scientific">Rattus norvegicus</name>
    <name type="common">Rat</name>
    <dbReference type="NCBI Taxonomy" id="10116"/>
    <lineage>
        <taxon>Eukaryota</taxon>
        <taxon>Metazoa</taxon>
        <taxon>Chordata</taxon>
        <taxon>Craniata</taxon>
        <taxon>Vertebrata</taxon>
        <taxon>Euteleostomi</taxon>
        <taxon>Mammalia</taxon>
        <taxon>Eutheria</taxon>
        <taxon>Euarchontoglires</taxon>
        <taxon>Glires</taxon>
        <taxon>Rodentia</taxon>
        <taxon>Myomorpha</taxon>
        <taxon>Muroidea</taxon>
        <taxon>Muridae</taxon>
        <taxon>Murinae</taxon>
        <taxon>Rattus</taxon>
    </lineage>
</organism>
<protein>
    <recommendedName>
        <fullName>Thymosin beta-10</fullName>
    </recommendedName>
</protein>
<feature type="initiator methionine" description="Removed" evidence="2">
    <location>
        <position position="1"/>
    </location>
</feature>
<feature type="chain" id="PRO_0000045933" description="Thymosin beta-10">
    <location>
        <begin position="2"/>
        <end position="44"/>
    </location>
</feature>
<feature type="region of interest" description="Disordered" evidence="5">
    <location>
        <begin position="1"/>
        <end position="44"/>
    </location>
</feature>
<feature type="compositionally biased region" description="Basic and acidic residues" evidence="5">
    <location>
        <begin position="1"/>
        <end position="25"/>
    </location>
</feature>
<feature type="compositionally biased region" description="Basic and acidic residues" evidence="5">
    <location>
        <begin position="33"/>
        <end position="44"/>
    </location>
</feature>
<feature type="modified residue" description="N-acetylalanine" evidence="2">
    <location>
        <position position="2"/>
    </location>
</feature>
<feature type="modified residue" description="N6-acetyllysine" evidence="3">
    <location>
        <position position="4"/>
    </location>
</feature>
<feature type="modified residue" description="Phosphoserine" evidence="7">
    <location>
        <position position="12"/>
    </location>
</feature>
<feature type="modified residue" description="N6-acetyllysine" evidence="3">
    <location>
        <position position="15"/>
    </location>
</feature>
<feature type="modified residue" description="Phosphothreonine" evidence="4">
    <location>
        <position position="21"/>
    </location>
</feature>
<feature type="modified residue" description="Phosphothreonine" evidence="3">
    <location>
        <position position="23"/>
    </location>
</feature>
<feature type="modified residue" description="Phosphothreonine" evidence="7">
    <location>
        <position position="34"/>
    </location>
</feature>
<feature type="modified residue" description="N6-acetyllysine" evidence="3">
    <location>
        <position position="39"/>
    </location>
</feature>
<feature type="modified residue" description="Phosphoserine" evidence="7">
    <location>
        <position position="41"/>
    </location>
</feature>
<keyword id="KW-0007">Acetylation</keyword>
<keyword id="KW-0009">Actin-binding</keyword>
<keyword id="KW-0963">Cytoplasm</keyword>
<keyword id="KW-0206">Cytoskeleton</keyword>
<keyword id="KW-0597">Phosphoprotein</keyword>
<keyword id="KW-1185">Reference proteome</keyword>
<comment type="function">
    <text evidence="1">Plays an important role in the organization of the cytoskeleton. Binds to and sequesters actin monomers (G actin) and therefore inhibits actin polymerization (By similarity).</text>
</comment>
<comment type="subcellular location">
    <subcellularLocation>
        <location>Cytoplasm</location>
        <location>Cytoskeleton</location>
    </subcellularLocation>
</comment>
<comment type="developmental stage">
    <text>Found to decrease dramatically after birth.</text>
</comment>
<comment type="similarity">
    <text evidence="6">Belongs to the thymosin beta family.</text>
</comment>
<name>TYB10_RAT</name>
<reference key="1">
    <citation type="journal article" date="1987" name="Arch. Biochem. Biophys.">
        <title>Molecular cloning of the cDNA for rat spleen thymosin beta 10 and the deduced amino acid sequence.</title>
        <authorList>
            <person name="Goodall G.J."/>
            <person name="Horecker B.L."/>
        </authorList>
    </citation>
    <scope>NUCLEOTIDE SEQUENCE [MRNA]</scope>
</reference>
<reference key="2">
    <citation type="journal article" date="1991" name="J. Neurochem.">
        <title>Developmental regulation of beta-thymosins in the rat central nervous system.</title>
        <authorList>
            <person name="Lugo D.I."/>
            <person name="Chen S.C."/>
            <person name="Hall A.K."/>
            <person name="Ziai R."/>
            <person name="Hempstead J.L."/>
            <person name="Morgan J.I."/>
        </authorList>
    </citation>
    <scope>NUCLEOTIDE SEQUENCE [MRNA]</scope>
</reference>
<reference key="3">
    <citation type="journal article" date="1991" name="J. Biol. Chem.">
        <title>Cloning and characterization of a testis-specific thymosin beta 10 cDNA. Expression in post-meiotic male germ cells.</title>
        <authorList>
            <person name="Lin S.-C."/>
            <person name="Morrison-Bogorad M."/>
        </authorList>
    </citation>
    <scope>NUCLEOTIDE SEQUENCE [MRNA]</scope>
    <source>
        <strain>Sprague-Dawley</strain>
        <tissue>Testis</tissue>
    </source>
</reference>
<reference key="4">
    <citation type="journal article" date="2012" name="Nat. Commun.">
        <title>Quantitative maps of protein phosphorylation sites across 14 different rat organs and tissues.</title>
        <authorList>
            <person name="Lundby A."/>
            <person name="Secher A."/>
            <person name="Lage K."/>
            <person name="Nordsborg N.B."/>
            <person name="Dmytriyev A."/>
            <person name="Lundby C."/>
            <person name="Olsen J.V."/>
        </authorList>
    </citation>
    <scope>PHOSPHORYLATION [LARGE SCALE ANALYSIS] AT SER-12; THR-34 AND SER-41</scope>
    <scope>IDENTIFICATION BY MASS SPECTROMETRY [LARGE SCALE ANALYSIS]</scope>
</reference>
<dbReference type="EMBL" id="M17698">
    <property type="protein sequence ID" value="AAA42244.1"/>
    <property type="molecule type" value="mRNA"/>
</dbReference>
<dbReference type="EMBL" id="M58404">
    <property type="protein sequence ID" value="AAA42247.1"/>
    <property type="molecule type" value="mRNA"/>
</dbReference>
<dbReference type="EMBL" id="M58405">
    <property type="protein sequence ID" value="AAA42248.1"/>
    <property type="molecule type" value="mRNA"/>
</dbReference>
<dbReference type="PIR" id="A27266">
    <property type="entry name" value="A27266"/>
</dbReference>
<dbReference type="RefSeq" id="NP_067084.1">
    <property type="nucleotide sequence ID" value="NM_021261.3"/>
</dbReference>
<dbReference type="RefSeq" id="XP_002726998.1">
    <property type="nucleotide sequence ID" value="XM_002726952.5"/>
</dbReference>
<dbReference type="RefSeq" id="XP_006236754.1">
    <property type="nucleotide sequence ID" value="XM_006236692.5"/>
</dbReference>
<dbReference type="RefSeq" id="XP_017450884.1">
    <property type="nucleotide sequence ID" value="XM_017595395.1"/>
</dbReference>
<dbReference type="SMR" id="P63312"/>
<dbReference type="FunCoup" id="P63312">
    <property type="interactions" value="313"/>
</dbReference>
<dbReference type="STRING" id="10116.ENSRNOP00000051221"/>
<dbReference type="iPTMnet" id="P63312"/>
<dbReference type="PhosphoSitePlus" id="P63312"/>
<dbReference type="PaxDb" id="10116-ENSRNOP00000051221"/>
<dbReference type="GeneID" id="50665"/>
<dbReference type="KEGG" id="rno:50665"/>
<dbReference type="UCSC" id="RGD:62022">
    <property type="organism name" value="rat"/>
</dbReference>
<dbReference type="AGR" id="RGD:62022"/>
<dbReference type="CTD" id="9168"/>
<dbReference type="RGD" id="62022">
    <property type="gene designation" value="Tmsb10"/>
</dbReference>
<dbReference type="VEuPathDB" id="HostDB:ENSRNOG00000036921"/>
<dbReference type="eggNOG" id="KOG4794">
    <property type="taxonomic scope" value="Eukaryota"/>
</dbReference>
<dbReference type="HOGENOM" id="CLU_208046_0_1_1"/>
<dbReference type="InParanoid" id="P63312"/>
<dbReference type="OrthoDB" id="58627at9989"/>
<dbReference type="PhylomeDB" id="P63312"/>
<dbReference type="PRO" id="PR:P63312"/>
<dbReference type="Proteomes" id="UP000002494">
    <property type="component" value="Chromosome 10"/>
</dbReference>
<dbReference type="Bgee" id="ENSRNOG00000036921">
    <property type="expression patterns" value="Expressed in spleen and 5 other cell types or tissues"/>
</dbReference>
<dbReference type="GO" id="GO:0005737">
    <property type="term" value="C:cytoplasm"/>
    <property type="evidence" value="ECO:0000318"/>
    <property type="project" value="GO_Central"/>
</dbReference>
<dbReference type="GO" id="GO:0005856">
    <property type="term" value="C:cytoskeleton"/>
    <property type="evidence" value="ECO:0007669"/>
    <property type="project" value="UniProtKB-SubCell"/>
</dbReference>
<dbReference type="GO" id="GO:0003785">
    <property type="term" value="F:actin monomer binding"/>
    <property type="evidence" value="ECO:0000318"/>
    <property type="project" value="GO_Central"/>
</dbReference>
<dbReference type="GO" id="GO:0030036">
    <property type="term" value="P:actin cytoskeleton organization"/>
    <property type="evidence" value="ECO:0000304"/>
    <property type="project" value="RGD"/>
</dbReference>
<dbReference type="GO" id="GO:0007015">
    <property type="term" value="P:actin filament organization"/>
    <property type="evidence" value="ECO:0007669"/>
    <property type="project" value="InterPro"/>
</dbReference>
<dbReference type="GO" id="GO:0030334">
    <property type="term" value="P:regulation of cell migration"/>
    <property type="evidence" value="ECO:0000318"/>
    <property type="project" value="GO_Central"/>
</dbReference>
<dbReference type="GO" id="GO:0007286">
    <property type="term" value="P:spermatid development"/>
    <property type="evidence" value="ECO:0000304"/>
    <property type="project" value="ProtInc"/>
</dbReference>
<dbReference type="FunFam" id="1.20.5.520:FF:000001">
    <property type="entry name" value="Thymosin beta"/>
    <property type="match status" value="1"/>
</dbReference>
<dbReference type="Gene3D" id="1.20.5.520">
    <property type="entry name" value="Single helix bin"/>
    <property type="match status" value="1"/>
</dbReference>
<dbReference type="InterPro" id="IPR001152">
    <property type="entry name" value="Beta-thymosin"/>
</dbReference>
<dbReference type="InterPro" id="IPR038386">
    <property type="entry name" value="Beta-thymosin_sf"/>
</dbReference>
<dbReference type="PANTHER" id="PTHR12021">
    <property type="entry name" value="THYMOSIN BETA"/>
    <property type="match status" value="1"/>
</dbReference>
<dbReference type="PANTHER" id="PTHR12021:SF10">
    <property type="entry name" value="THYMOSIN BETA-10"/>
    <property type="match status" value="1"/>
</dbReference>
<dbReference type="Pfam" id="PF01290">
    <property type="entry name" value="Thymosin"/>
    <property type="match status" value="1"/>
</dbReference>
<dbReference type="PIRSF" id="PIRSF001828">
    <property type="entry name" value="Thymosin_beta"/>
    <property type="match status" value="1"/>
</dbReference>
<dbReference type="SMART" id="SM00152">
    <property type="entry name" value="THY"/>
    <property type="match status" value="1"/>
</dbReference>
<dbReference type="PROSITE" id="PS00500">
    <property type="entry name" value="THYMOSIN_B4"/>
    <property type="match status" value="1"/>
</dbReference>
<sequence>MADKPDMGEIASFDKAKLKKTETQEKNTLPTKETIEQEKRSEIS</sequence>
<evidence type="ECO:0000250" key="1"/>
<evidence type="ECO:0000250" key="2">
    <source>
        <dbReference type="UniProtKB" id="P21752"/>
    </source>
</evidence>
<evidence type="ECO:0000250" key="3">
    <source>
        <dbReference type="UniProtKB" id="P63313"/>
    </source>
</evidence>
<evidence type="ECO:0000250" key="4">
    <source>
        <dbReference type="UniProtKB" id="Q6ZWY8"/>
    </source>
</evidence>
<evidence type="ECO:0000256" key="5">
    <source>
        <dbReference type="SAM" id="MobiDB-lite"/>
    </source>
</evidence>
<evidence type="ECO:0000305" key="6"/>
<evidence type="ECO:0007744" key="7">
    <source>
    </source>
</evidence>
<accession>P63312</accession>
<accession>P13472</accession>
<gene>
    <name type="primary">Tmsb10</name>
    <name type="synonym">Ptmb10</name>
    <name type="synonym">Thyb10</name>
</gene>
<proteinExistence type="evidence at protein level"/>